<feature type="chain" id="PRO_0000329168" description="DNA-directed RNA polymerase subunit beta">
    <location>
        <begin position="1"/>
        <end position="1227"/>
    </location>
</feature>
<dbReference type="EC" id="2.7.7.6" evidence="1"/>
<dbReference type="EMBL" id="CP000909">
    <property type="protein sequence ID" value="ABY34107.1"/>
    <property type="molecule type" value="Genomic_DNA"/>
</dbReference>
<dbReference type="RefSeq" id="WP_012256763.1">
    <property type="nucleotide sequence ID" value="NC_010175.1"/>
</dbReference>
<dbReference type="RefSeq" id="YP_001634496.1">
    <property type="nucleotide sequence ID" value="NC_010175.1"/>
</dbReference>
<dbReference type="SMR" id="A9WH12"/>
<dbReference type="FunCoup" id="A9WH12">
    <property type="interactions" value="442"/>
</dbReference>
<dbReference type="STRING" id="324602.Caur_0874"/>
<dbReference type="EnsemblBacteria" id="ABY34107">
    <property type="protein sequence ID" value="ABY34107"/>
    <property type="gene ID" value="Caur_0874"/>
</dbReference>
<dbReference type="KEGG" id="cau:Caur_0874"/>
<dbReference type="PATRIC" id="fig|324602.8.peg.1003"/>
<dbReference type="eggNOG" id="COG0085">
    <property type="taxonomic scope" value="Bacteria"/>
</dbReference>
<dbReference type="HOGENOM" id="CLU_000524_4_1_0"/>
<dbReference type="InParanoid" id="A9WH12"/>
<dbReference type="Proteomes" id="UP000002008">
    <property type="component" value="Chromosome"/>
</dbReference>
<dbReference type="GO" id="GO:0000428">
    <property type="term" value="C:DNA-directed RNA polymerase complex"/>
    <property type="evidence" value="ECO:0007669"/>
    <property type="project" value="UniProtKB-KW"/>
</dbReference>
<dbReference type="GO" id="GO:0003677">
    <property type="term" value="F:DNA binding"/>
    <property type="evidence" value="ECO:0007669"/>
    <property type="project" value="UniProtKB-UniRule"/>
</dbReference>
<dbReference type="GO" id="GO:0003899">
    <property type="term" value="F:DNA-directed RNA polymerase activity"/>
    <property type="evidence" value="ECO:0007669"/>
    <property type="project" value="UniProtKB-UniRule"/>
</dbReference>
<dbReference type="GO" id="GO:0032549">
    <property type="term" value="F:ribonucleoside binding"/>
    <property type="evidence" value="ECO:0007669"/>
    <property type="project" value="InterPro"/>
</dbReference>
<dbReference type="GO" id="GO:0006351">
    <property type="term" value="P:DNA-templated transcription"/>
    <property type="evidence" value="ECO:0007669"/>
    <property type="project" value="UniProtKB-UniRule"/>
</dbReference>
<dbReference type="CDD" id="cd12797">
    <property type="entry name" value="M23_peptidase"/>
    <property type="match status" value="1"/>
</dbReference>
<dbReference type="CDD" id="cd00653">
    <property type="entry name" value="RNA_pol_B_RPB2"/>
    <property type="match status" value="1"/>
</dbReference>
<dbReference type="FunFam" id="3.90.1800.10:FF:000001">
    <property type="entry name" value="DNA-directed RNA polymerase subunit beta"/>
    <property type="match status" value="1"/>
</dbReference>
<dbReference type="Gene3D" id="2.40.50.100">
    <property type="match status" value="1"/>
</dbReference>
<dbReference type="Gene3D" id="2.40.50.150">
    <property type="match status" value="1"/>
</dbReference>
<dbReference type="Gene3D" id="3.90.1100.10">
    <property type="match status" value="2"/>
</dbReference>
<dbReference type="Gene3D" id="2.40.270.10">
    <property type="entry name" value="DNA-directed RNA polymerase, subunit 2, domain 6"/>
    <property type="match status" value="1"/>
</dbReference>
<dbReference type="Gene3D" id="3.90.1800.10">
    <property type="entry name" value="RNA polymerase alpha subunit dimerisation domain"/>
    <property type="match status" value="1"/>
</dbReference>
<dbReference type="Gene3D" id="3.90.1110.10">
    <property type="entry name" value="RNA polymerase Rpb2, domain 2"/>
    <property type="match status" value="1"/>
</dbReference>
<dbReference type="HAMAP" id="MF_01321">
    <property type="entry name" value="RNApol_bact_RpoB"/>
    <property type="match status" value="1"/>
</dbReference>
<dbReference type="InterPro" id="IPR019462">
    <property type="entry name" value="DNA-dir_RNA_pol_bsu_external_1"/>
</dbReference>
<dbReference type="InterPro" id="IPR015712">
    <property type="entry name" value="DNA-dir_RNA_pol_su2"/>
</dbReference>
<dbReference type="InterPro" id="IPR007120">
    <property type="entry name" value="DNA-dir_RNAP_su2_dom"/>
</dbReference>
<dbReference type="InterPro" id="IPR037033">
    <property type="entry name" value="DNA-dir_RNAP_su2_hyb_sf"/>
</dbReference>
<dbReference type="InterPro" id="IPR010243">
    <property type="entry name" value="RNA_pol_bsu_bac"/>
</dbReference>
<dbReference type="InterPro" id="IPR007121">
    <property type="entry name" value="RNA_pol_bsu_CS"/>
</dbReference>
<dbReference type="InterPro" id="IPR007644">
    <property type="entry name" value="RNA_pol_bsu_protrusion"/>
</dbReference>
<dbReference type="InterPro" id="IPR007642">
    <property type="entry name" value="RNA_pol_Rpb2_2"/>
</dbReference>
<dbReference type="InterPro" id="IPR037034">
    <property type="entry name" value="RNA_pol_Rpb2_2_sf"/>
</dbReference>
<dbReference type="InterPro" id="IPR007645">
    <property type="entry name" value="RNA_pol_Rpb2_3"/>
</dbReference>
<dbReference type="InterPro" id="IPR007641">
    <property type="entry name" value="RNA_pol_Rpb2_7"/>
</dbReference>
<dbReference type="InterPro" id="IPR014724">
    <property type="entry name" value="RNA_pol_RPB2_OB-fold"/>
</dbReference>
<dbReference type="NCBIfam" id="NF001616">
    <property type="entry name" value="PRK00405.1"/>
    <property type="match status" value="1"/>
</dbReference>
<dbReference type="PANTHER" id="PTHR20856">
    <property type="entry name" value="DNA-DIRECTED RNA POLYMERASE I SUBUNIT 2"/>
    <property type="match status" value="1"/>
</dbReference>
<dbReference type="Pfam" id="PF04563">
    <property type="entry name" value="RNA_pol_Rpb2_1"/>
    <property type="match status" value="1"/>
</dbReference>
<dbReference type="Pfam" id="PF04561">
    <property type="entry name" value="RNA_pol_Rpb2_2"/>
    <property type="match status" value="2"/>
</dbReference>
<dbReference type="Pfam" id="PF04565">
    <property type="entry name" value="RNA_pol_Rpb2_3"/>
    <property type="match status" value="1"/>
</dbReference>
<dbReference type="Pfam" id="PF10385">
    <property type="entry name" value="RNA_pol_Rpb2_45"/>
    <property type="match status" value="1"/>
</dbReference>
<dbReference type="Pfam" id="PF00562">
    <property type="entry name" value="RNA_pol_Rpb2_6"/>
    <property type="match status" value="1"/>
</dbReference>
<dbReference type="Pfam" id="PF04560">
    <property type="entry name" value="RNA_pol_Rpb2_7"/>
    <property type="match status" value="1"/>
</dbReference>
<dbReference type="SUPFAM" id="SSF64484">
    <property type="entry name" value="beta and beta-prime subunits of DNA dependent RNA-polymerase"/>
    <property type="match status" value="1"/>
</dbReference>
<dbReference type="PROSITE" id="PS01166">
    <property type="entry name" value="RNA_POL_BETA"/>
    <property type="match status" value="1"/>
</dbReference>
<evidence type="ECO:0000255" key="1">
    <source>
        <dbReference type="HAMAP-Rule" id="MF_01321"/>
    </source>
</evidence>
<keyword id="KW-0240">DNA-directed RNA polymerase</keyword>
<keyword id="KW-0548">Nucleotidyltransferase</keyword>
<keyword id="KW-1185">Reference proteome</keyword>
<keyword id="KW-0804">Transcription</keyword>
<keyword id="KW-0808">Transferase</keyword>
<protein>
    <recommendedName>
        <fullName evidence="1">DNA-directed RNA polymerase subunit beta</fullName>
        <shortName evidence="1">RNAP subunit beta</shortName>
        <ecNumber evidence="1">2.7.7.6</ecNumber>
    </recommendedName>
    <alternativeName>
        <fullName evidence="1">RNA polymerase subunit beta</fullName>
    </alternativeName>
    <alternativeName>
        <fullName evidence="1">Transcriptase subunit beta</fullName>
    </alternativeName>
</protein>
<name>RPOB_CHLAA</name>
<sequence length="1227" mass="137772">MPPLIESVVLQPLIAPIDPGADGRRSRRIERRSFARIKDAIDLPLLIETQLKSFEWFKREGLRELFDEISPITDFTGKNLELHFRDYTFGEPRYDEFECRERDLTYAAPLRVRVELRILTTGEIKESEIFLGDFPIMTDNGTFVYNGAERVVVSQLIRSPGVYFKDEKEPTSGRSLHTAKLIPNRGAWLEFETNKRDVISVKVDRKRKIPVTILLRAITAWIAEENGNGRWVPDNELDKFGHNDQIIELFRHVDTVPEHPYIHATLDKDPSRNAKEALLELYKRLRPGDPPTLENARSLIESLLFSPRRYDLAKVGRYKLNKNLWERDVRRDGAKAPDLSVRVLLPRDIFRIVEQLILLNNGHGRPDDIDHLGNRRVRTVGELIQQQFRVGLLRLERVVKERMSLQDPASATPNGLINIRPVVAAMREFFGGSQLSQFMDQTNPLAELTNKRRLSALGPGGLSRDRAGFEVRDVHHSHYGRICPVETPEGPNIGLIGTMSTFARVNEMGFLETPYRKVYNSVDNVQVWKEKGILLRDVRDLRTGDLIAAKGTRVNDEIARQITIGLLRGQILREDIVDPDTDELIAEAGTEINRALAERIVELPIKHIKIRPVVSQEVDYLSADEEDRFVIVQANAPLDQHNRFLDTIVSCRFGEDFVSERVERVDYMDVSPKQVVSVSTSLIPFLEHDDANRALMGSNMQRQAVPLLRPDAPIVGTGMEYRAARDSGQVIVARRDGVVVSTTSERIVIEEDDGNQTEYRLRKFMRSNQDTCINQRPAVVRGQRVKAGDVIADSSSTDQGELALGQNVLVAYMPWEGGNFEDAILVSERLVREDIFTSIHIEKYEVEARDTKLGPEEITRDIPNVGQESLRNLDERGIIYIGAEVQPNDILVGKITPKGETDLTAEERLLRAIFGEKAREVKDSSLRVPNGVRGKVIDVKVFSRSEGAELPVGVNQTVRVLLCQKRKISAGDKMAGRHGNKGVVSRVLPIEDMPFLPDGRPVDIILNPIGVPSRMNIGQILETHLGWAAARLGFRVATPVFDGAHEDQIKDLLVQAGLPADGKVTLYDGRTGERFDNPVTVGYAYMLKLAHLVEDKIHARSTGPYSLVTQQPLGGKAQFGGQRFGEMEVWALEAYGAAYTLQEMLTVKSDDVVGRVKTYEAIVKGEPIQEAGVPESFKVLIKELQSLGLSVEVLSADEKPVELSDDLDSDIGALEGINLSGMERGEF</sequence>
<organism>
    <name type="scientific">Chloroflexus aurantiacus (strain ATCC 29366 / DSM 635 / J-10-fl)</name>
    <dbReference type="NCBI Taxonomy" id="324602"/>
    <lineage>
        <taxon>Bacteria</taxon>
        <taxon>Bacillati</taxon>
        <taxon>Chloroflexota</taxon>
        <taxon>Chloroflexia</taxon>
        <taxon>Chloroflexales</taxon>
        <taxon>Chloroflexineae</taxon>
        <taxon>Chloroflexaceae</taxon>
        <taxon>Chloroflexus</taxon>
    </lineage>
</organism>
<reference key="1">
    <citation type="journal article" date="2011" name="BMC Genomics">
        <title>Complete genome sequence of the filamentous anoxygenic phototrophic bacterium Chloroflexus aurantiacus.</title>
        <authorList>
            <person name="Tang K.H."/>
            <person name="Barry K."/>
            <person name="Chertkov O."/>
            <person name="Dalin E."/>
            <person name="Han C.S."/>
            <person name="Hauser L.J."/>
            <person name="Honchak B.M."/>
            <person name="Karbach L.E."/>
            <person name="Land M.L."/>
            <person name="Lapidus A."/>
            <person name="Larimer F.W."/>
            <person name="Mikhailova N."/>
            <person name="Pitluck S."/>
            <person name="Pierson B.K."/>
            <person name="Blankenship R.E."/>
        </authorList>
    </citation>
    <scope>NUCLEOTIDE SEQUENCE [LARGE SCALE GENOMIC DNA]</scope>
    <source>
        <strain>ATCC 29366 / DSM 635 / J-10-fl</strain>
    </source>
</reference>
<comment type="function">
    <text evidence="1">DNA-dependent RNA polymerase catalyzes the transcription of DNA into RNA using the four ribonucleoside triphosphates as substrates.</text>
</comment>
<comment type="catalytic activity">
    <reaction evidence="1">
        <text>RNA(n) + a ribonucleoside 5'-triphosphate = RNA(n+1) + diphosphate</text>
        <dbReference type="Rhea" id="RHEA:21248"/>
        <dbReference type="Rhea" id="RHEA-COMP:14527"/>
        <dbReference type="Rhea" id="RHEA-COMP:17342"/>
        <dbReference type="ChEBI" id="CHEBI:33019"/>
        <dbReference type="ChEBI" id="CHEBI:61557"/>
        <dbReference type="ChEBI" id="CHEBI:140395"/>
        <dbReference type="EC" id="2.7.7.6"/>
    </reaction>
</comment>
<comment type="subunit">
    <text evidence="1">The RNAP catalytic core consists of 2 alpha, 1 beta, 1 beta' and 1 omega subunit. When a sigma factor is associated with the core the holoenzyme is formed, which can initiate transcription.</text>
</comment>
<comment type="similarity">
    <text evidence="1">Belongs to the RNA polymerase beta chain family.</text>
</comment>
<gene>
    <name evidence="1" type="primary">rpoB</name>
    <name type="ordered locus">Caur_0874</name>
</gene>
<proteinExistence type="inferred from homology"/>
<accession>A9WH12</accession>